<name>MMPOS_HUMAN</name>
<protein>
    <recommendedName>
        <fullName evidence="2">Protein MMP24OS</fullName>
    </recommendedName>
    <alternativeName>
        <fullName evidence="3">MMP24 opposite strand</fullName>
    </alternativeName>
</protein>
<feature type="chain" id="PRO_0000444503" description="Protein MMP24OS">
    <location>
        <begin position="1"/>
        <end position="71"/>
    </location>
</feature>
<feature type="region of interest" description="Disordered" evidence="1">
    <location>
        <begin position="1"/>
        <end position="61"/>
    </location>
</feature>
<feature type="compositionally biased region" description="Gly residues" evidence="1">
    <location>
        <begin position="1"/>
        <end position="10"/>
    </location>
</feature>
<feature type="compositionally biased region" description="Pro residues" evidence="1">
    <location>
        <begin position="36"/>
        <end position="55"/>
    </location>
</feature>
<evidence type="ECO:0000256" key="1">
    <source>
        <dbReference type="SAM" id="MobiDB-lite"/>
    </source>
</evidence>
<evidence type="ECO:0000305" key="2"/>
<evidence type="ECO:0000312" key="3">
    <source>
        <dbReference type="HGNC" id="HGNC:44421"/>
    </source>
</evidence>
<reference key="1">
    <citation type="journal article" date="2001" name="Nature">
        <title>The DNA sequence and comparative analysis of human chromosome 20.</title>
        <authorList>
            <person name="Deloukas P."/>
            <person name="Matthews L.H."/>
            <person name="Ashurst J.L."/>
            <person name="Burton J."/>
            <person name="Gilbert J.G.R."/>
            <person name="Jones M."/>
            <person name="Stavrides G."/>
            <person name="Almeida J.P."/>
            <person name="Babbage A.K."/>
            <person name="Bagguley C.L."/>
            <person name="Bailey J."/>
            <person name="Barlow K.F."/>
            <person name="Bates K.N."/>
            <person name="Beard L.M."/>
            <person name="Beare D.M."/>
            <person name="Beasley O.P."/>
            <person name="Bird C.P."/>
            <person name="Blakey S.E."/>
            <person name="Bridgeman A.M."/>
            <person name="Brown A.J."/>
            <person name="Buck D."/>
            <person name="Burrill W.D."/>
            <person name="Butler A.P."/>
            <person name="Carder C."/>
            <person name="Carter N.P."/>
            <person name="Chapman J.C."/>
            <person name="Clamp M."/>
            <person name="Clark G."/>
            <person name="Clark L.N."/>
            <person name="Clark S.Y."/>
            <person name="Clee C.M."/>
            <person name="Clegg S."/>
            <person name="Cobley V.E."/>
            <person name="Collier R.E."/>
            <person name="Connor R.E."/>
            <person name="Corby N.R."/>
            <person name="Coulson A."/>
            <person name="Coville G.J."/>
            <person name="Deadman R."/>
            <person name="Dhami P.D."/>
            <person name="Dunn M."/>
            <person name="Ellington A.G."/>
            <person name="Frankland J.A."/>
            <person name="Fraser A."/>
            <person name="French L."/>
            <person name="Garner P."/>
            <person name="Grafham D.V."/>
            <person name="Griffiths C."/>
            <person name="Griffiths M.N.D."/>
            <person name="Gwilliam R."/>
            <person name="Hall R.E."/>
            <person name="Hammond S."/>
            <person name="Harley J.L."/>
            <person name="Heath P.D."/>
            <person name="Ho S."/>
            <person name="Holden J.L."/>
            <person name="Howden P.J."/>
            <person name="Huckle E."/>
            <person name="Hunt A.R."/>
            <person name="Hunt S.E."/>
            <person name="Jekosch K."/>
            <person name="Johnson C.M."/>
            <person name="Johnson D."/>
            <person name="Kay M.P."/>
            <person name="Kimberley A.M."/>
            <person name="King A."/>
            <person name="Knights A."/>
            <person name="Laird G.K."/>
            <person name="Lawlor S."/>
            <person name="Lehvaeslaiho M.H."/>
            <person name="Leversha M.A."/>
            <person name="Lloyd C."/>
            <person name="Lloyd D.M."/>
            <person name="Lovell J.D."/>
            <person name="Marsh V.L."/>
            <person name="Martin S.L."/>
            <person name="McConnachie L.J."/>
            <person name="McLay K."/>
            <person name="McMurray A.A."/>
            <person name="Milne S.A."/>
            <person name="Mistry D."/>
            <person name="Moore M.J.F."/>
            <person name="Mullikin J.C."/>
            <person name="Nickerson T."/>
            <person name="Oliver K."/>
            <person name="Parker A."/>
            <person name="Patel R."/>
            <person name="Pearce T.A.V."/>
            <person name="Peck A.I."/>
            <person name="Phillimore B.J.C.T."/>
            <person name="Prathalingam S.R."/>
            <person name="Plumb R.W."/>
            <person name="Ramsay H."/>
            <person name="Rice C.M."/>
            <person name="Ross M.T."/>
            <person name="Scott C.E."/>
            <person name="Sehra H.K."/>
            <person name="Shownkeen R."/>
            <person name="Sims S."/>
            <person name="Skuce C.D."/>
            <person name="Smith M.L."/>
            <person name="Soderlund C."/>
            <person name="Steward C.A."/>
            <person name="Sulston J.E."/>
            <person name="Swann R.M."/>
            <person name="Sycamore N."/>
            <person name="Taylor R."/>
            <person name="Tee L."/>
            <person name="Thomas D.W."/>
            <person name="Thorpe A."/>
            <person name="Tracey A."/>
            <person name="Tromans A.C."/>
            <person name="Vaudin M."/>
            <person name="Wall M."/>
            <person name="Wallis J.M."/>
            <person name="Whitehead S.L."/>
            <person name="Whittaker P."/>
            <person name="Willey D.L."/>
            <person name="Williams L."/>
            <person name="Williams S.A."/>
            <person name="Wilming L."/>
            <person name="Wray P.W."/>
            <person name="Hubbard T."/>
            <person name="Durbin R.M."/>
            <person name="Bentley D.R."/>
            <person name="Beck S."/>
            <person name="Rogers J."/>
        </authorList>
    </citation>
    <scope>NUCLEOTIDE SEQUENCE [LARGE SCALE GENOMIC DNA]</scope>
</reference>
<reference key="2">
    <citation type="journal article" date="2018" name="Proteomics">
        <title>Proteogenomic analysis to identify missing proteins from haploid cell lines.</title>
        <authorList>
            <person name="Lee S.E."/>
            <person name="Song J."/>
            <person name="Boesl K."/>
            <person name="Mueller A.C."/>
            <person name="Vitko D."/>
            <person name="Bennett K.L."/>
            <person name="Superti-Furga G."/>
            <person name="Pandey A."/>
            <person name="Kandasamy R.K."/>
            <person name="Kim M.S."/>
        </authorList>
    </citation>
    <scope>PROTEIN SEQUENCE OF 10-35</scope>
    <scope>IDENTIFICATION BY MASS SPECTROMETRY</scope>
</reference>
<proteinExistence type="evidence at protein level"/>
<organism>
    <name type="scientific">Homo sapiens</name>
    <name type="common">Human</name>
    <dbReference type="NCBI Taxonomy" id="9606"/>
    <lineage>
        <taxon>Eukaryota</taxon>
        <taxon>Metazoa</taxon>
        <taxon>Chordata</taxon>
        <taxon>Craniata</taxon>
        <taxon>Vertebrata</taxon>
        <taxon>Euteleostomi</taxon>
        <taxon>Mammalia</taxon>
        <taxon>Eutheria</taxon>
        <taxon>Euarchontoglires</taxon>
        <taxon>Primates</taxon>
        <taxon>Haplorrhini</taxon>
        <taxon>Catarrhini</taxon>
        <taxon>Hominidae</taxon>
        <taxon>Homo</taxon>
    </lineage>
</organism>
<keyword id="KW-0903">Direct protein sequencing</keyword>
<keyword id="KW-1267">Proteomics identification</keyword>
<keyword id="KW-1185">Reference proteome</keyword>
<accession>A0A0U1RRL7</accession>
<dbReference type="EMBL" id="AL121753">
    <property type="status" value="NOT_ANNOTATED_CDS"/>
    <property type="molecule type" value="Genomic_DNA"/>
</dbReference>
<dbReference type="CCDS" id="CCDS86948.1"/>
<dbReference type="RefSeq" id="NP_001341932.1">
    <property type="nucleotide sequence ID" value="NM_001355003.2"/>
</dbReference>
<dbReference type="RefSeq" id="NP_001341933.1">
    <property type="nucleotide sequence ID" value="NM_001355004.2"/>
</dbReference>
<dbReference type="FunCoup" id="A0A0U1RRL7">
    <property type="interactions" value="1"/>
</dbReference>
<dbReference type="IntAct" id="A0A0U1RRL7">
    <property type="interactions" value="1"/>
</dbReference>
<dbReference type="BioMuta" id="MMP24OS"/>
<dbReference type="jPOST" id="A0A0U1RRL7"/>
<dbReference type="MassIVE" id="A0A0U1RRL7"/>
<dbReference type="PeptideAtlas" id="A0A0U1RRL7"/>
<dbReference type="Pumba" id="A0A0U1RRL7"/>
<dbReference type="Ensembl" id="ENST00000424358.1">
    <property type="protein sequence ID" value="ENSP00000488948.1"/>
    <property type="gene ID" value="ENSG00000126005.17"/>
</dbReference>
<dbReference type="Ensembl" id="ENST00000435366.2">
    <property type="protein sequence ID" value="ENSP00000489182.1"/>
    <property type="gene ID" value="ENSG00000126005.17"/>
</dbReference>
<dbReference type="Ensembl" id="ENST00000456790.2">
    <property type="protein sequence ID" value="ENSP00000489588.1"/>
    <property type="gene ID" value="ENSG00000126005.17"/>
</dbReference>
<dbReference type="GeneID" id="101410538"/>
<dbReference type="MANE-Select" id="ENST00000456790.2">
    <property type="protein sequence ID" value="ENSP00000489588.1"/>
    <property type="RefSeq nucleotide sequence ID" value="NM_001355003.2"/>
    <property type="RefSeq protein sequence ID" value="NP_001341932.1"/>
</dbReference>
<dbReference type="AGR" id="HGNC:44421"/>
<dbReference type="GeneCards" id="MMP24OS"/>
<dbReference type="HGNC" id="HGNC:44421">
    <property type="gene designation" value="MMP24OS"/>
</dbReference>
<dbReference type="HPA" id="ENSG00000126005">
    <property type="expression patterns" value="Low tissue specificity"/>
</dbReference>
<dbReference type="neXtProt" id="NX_A0A0U1RRL7"/>
<dbReference type="OpenTargets" id="ENSG00000126005"/>
<dbReference type="VEuPathDB" id="HostDB:ENSG00000126005"/>
<dbReference type="GeneTree" id="ENSGT01130000280733"/>
<dbReference type="InParanoid" id="A0A0U1RRL7"/>
<dbReference type="OMA" id="PWGPLED"/>
<dbReference type="PAN-GO" id="A0A0U1RRL7">
    <property type="GO annotations" value="0 GO annotations based on evolutionary models"/>
</dbReference>
<dbReference type="SignaLink" id="A0A0U1RRL7"/>
<dbReference type="ChiTaRS" id="MMP24-AS1">
    <property type="organism name" value="human"/>
</dbReference>
<dbReference type="Pharos" id="A0A0U1RRL7">
    <property type="development level" value="Tdark"/>
</dbReference>
<dbReference type="PRO" id="PR:A0A0U1RRL7"/>
<dbReference type="Proteomes" id="UP000005640">
    <property type="component" value="Chromosome 20"/>
</dbReference>
<dbReference type="RNAct" id="A0A0U1RRL7">
    <property type="molecule type" value="protein"/>
</dbReference>
<dbReference type="Bgee" id="ENSG00000126005">
    <property type="expression patterns" value="Expressed in adenohypophysis and 201 other cell types or tissues"/>
</dbReference>
<sequence>MGAQLSGGRGAPEPAQTQPQPQPQPAAPEGPEQPRHPPQPQPQPQPQPQPEPSPWGPLDDVRFLIACTSWY</sequence>
<gene>
    <name evidence="3" type="primary">MMP24OS</name>
    <name evidence="3" type="synonym">MMP24-AS1</name>
</gene>